<comment type="function">
    <text>Shows neither neuropeptide activity nor antibiotic activity.</text>
</comment>
<comment type="subcellular location">
    <subcellularLocation>
        <location>Secreted</location>
    </subcellularLocation>
</comment>
<comment type="tissue specificity">
    <text>Expressed by the skin dorsal glands.</text>
</comment>
<comment type="mass spectrometry" mass="1039.0" method="FAB" evidence="1"/>
<sequence length="11" mass="1040">GLGDILGLLGL</sequence>
<reference key="1">
    <citation type="journal article" date="1996" name="Aust. J. Chem.">
        <title>The structure of new peptides from the Australin red tree frog 'Litoria rubella'. The skin peptide profile as a probe for the study of evolutionary trends of amphibians.</title>
        <authorList>
            <person name="Steinborner S.T."/>
            <person name="Wabnitz P.A."/>
            <person name="Waugh R.J."/>
            <person name="Bowie J.H."/>
            <person name="Gao C."/>
            <person name="Tyler M.J."/>
            <person name="Wallace J.C."/>
        </authorList>
    </citation>
    <scope>PROTEIN SEQUENCE</scope>
    <scope>AMIDATION AT LEU-11</scope>
    <scope>MASS SPECTROMETRY</scope>
    <source>
        <tissue>Skin secretion</tissue>
    </source>
</reference>
<dbReference type="GO" id="GO:0005576">
    <property type="term" value="C:extracellular region"/>
    <property type="evidence" value="ECO:0007669"/>
    <property type="project" value="UniProtKB-SubCell"/>
</dbReference>
<dbReference type="GO" id="GO:0006952">
    <property type="term" value="P:defense response"/>
    <property type="evidence" value="ECO:0007669"/>
    <property type="project" value="UniProtKB-KW"/>
</dbReference>
<proteinExistence type="evidence at protein level"/>
<keyword id="KW-0027">Amidation</keyword>
<keyword id="KW-0878">Amphibian defense peptide</keyword>
<keyword id="KW-0903">Direct protein sequencing</keyword>
<keyword id="KW-0964">Secreted</keyword>
<accession>P82074</accession>
<feature type="peptide" id="PRO_0000043836" description="Rubellidin-4.1">
    <location>
        <begin position="1"/>
        <end position="11"/>
    </location>
</feature>
<feature type="modified residue" description="Leucine amide" evidence="1">
    <location>
        <position position="11"/>
    </location>
</feature>
<protein>
    <recommendedName>
        <fullName>Rubellidin-4.1</fullName>
    </recommendedName>
</protein>
<evidence type="ECO:0000269" key="1">
    <source ref="1"/>
</evidence>
<name>RBE41_LITRU</name>
<organism>
    <name type="scientific">Litoria rubella</name>
    <name type="common">Desert tree frog</name>
    <name type="synonym">Hyla rubella</name>
    <dbReference type="NCBI Taxonomy" id="104895"/>
    <lineage>
        <taxon>Eukaryota</taxon>
        <taxon>Metazoa</taxon>
        <taxon>Chordata</taxon>
        <taxon>Craniata</taxon>
        <taxon>Vertebrata</taxon>
        <taxon>Euteleostomi</taxon>
        <taxon>Amphibia</taxon>
        <taxon>Batrachia</taxon>
        <taxon>Anura</taxon>
        <taxon>Neobatrachia</taxon>
        <taxon>Hyloidea</taxon>
        <taxon>Hylidae</taxon>
        <taxon>Pelodryadinae</taxon>
        <taxon>Litoria</taxon>
    </lineage>
</organism>